<protein>
    <recommendedName>
        <fullName evidence="1">D-alanyl carrier protein</fullName>
        <shortName evidence="1">DCP</shortName>
    </recommendedName>
    <alternativeName>
        <fullName evidence="1">D-alanine--poly(phosphoribitol) ligase subunit 2</fullName>
    </alternativeName>
</protein>
<dbReference type="EMBL" id="DQ489736">
    <property type="protein sequence ID" value="ACA83062.1"/>
    <property type="molecule type" value="Genomic_DNA"/>
</dbReference>
<dbReference type="RefSeq" id="WP_004901903.1">
    <property type="nucleotide sequence ID" value="NC_010471.1"/>
</dbReference>
<dbReference type="SMR" id="B1MZW0"/>
<dbReference type="STRING" id="349519.LCK_01237"/>
<dbReference type="GeneID" id="61101750"/>
<dbReference type="KEGG" id="lci:LCK_01237"/>
<dbReference type="eggNOG" id="COG0236">
    <property type="taxonomic scope" value="Bacteria"/>
</dbReference>
<dbReference type="HOGENOM" id="CLU_108696_19_0_9"/>
<dbReference type="OrthoDB" id="6462171at2"/>
<dbReference type="UniPathway" id="UPA00556"/>
<dbReference type="Proteomes" id="UP000002166">
    <property type="component" value="Chromosome"/>
</dbReference>
<dbReference type="GO" id="GO:0005737">
    <property type="term" value="C:cytoplasm"/>
    <property type="evidence" value="ECO:0007669"/>
    <property type="project" value="UniProtKB-SubCell"/>
</dbReference>
<dbReference type="GO" id="GO:0036370">
    <property type="term" value="F:D-alanyl carrier activity"/>
    <property type="evidence" value="ECO:0007669"/>
    <property type="project" value="UniProtKB-UniRule"/>
</dbReference>
<dbReference type="GO" id="GO:0071555">
    <property type="term" value="P:cell wall organization"/>
    <property type="evidence" value="ECO:0007669"/>
    <property type="project" value="UniProtKB-KW"/>
</dbReference>
<dbReference type="GO" id="GO:0070395">
    <property type="term" value="P:lipoteichoic acid biosynthetic process"/>
    <property type="evidence" value="ECO:0007669"/>
    <property type="project" value="UniProtKB-UniRule"/>
</dbReference>
<dbReference type="Gene3D" id="1.10.1200.10">
    <property type="entry name" value="ACP-like"/>
    <property type="match status" value="1"/>
</dbReference>
<dbReference type="HAMAP" id="MF_00565">
    <property type="entry name" value="DltC"/>
    <property type="match status" value="1"/>
</dbReference>
<dbReference type="InterPro" id="IPR036736">
    <property type="entry name" value="ACP-like_sf"/>
</dbReference>
<dbReference type="InterPro" id="IPR003230">
    <property type="entry name" value="DltC"/>
</dbReference>
<dbReference type="InterPro" id="IPR009081">
    <property type="entry name" value="PP-bd_ACP"/>
</dbReference>
<dbReference type="NCBIfam" id="TIGR01688">
    <property type="entry name" value="dltC"/>
    <property type="match status" value="1"/>
</dbReference>
<dbReference type="NCBIfam" id="NF003464">
    <property type="entry name" value="PRK05087.1"/>
    <property type="match status" value="1"/>
</dbReference>
<dbReference type="Pfam" id="PF00550">
    <property type="entry name" value="PP-binding"/>
    <property type="match status" value="1"/>
</dbReference>
<dbReference type="SUPFAM" id="SSF47336">
    <property type="entry name" value="ACP-like"/>
    <property type="match status" value="1"/>
</dbReference>
<dbReference type="PROSITE" id="PS50075">
    <property type="entry name" value="CARRIER"/>
    <property type="match status" value="1"/>
</dbReference>
<proteinExistence type="inferred from homology"/>
<feature type="chain" id="PRO_1000129400" description="D-alanyl carrier protein">
    <location>
        <begin position="1"/>
        <end position="78"/>
    </location>
</feature>
<feature type="domain" description="Carrier" evidence="1">
    <location>
        <begin position="1"/>
        <end position="77"/>
    </location>
</feature>
<feature type="modified residue" description="O-(pantetheine 4'-phosphoryl)serine" evidence="1">
    <location>
        <position position="35"/>
    </location>
</feature>
<accession>B1MZW0</accession>
<evidence type="ECO:0000255" key="1">
    <source>
        <dbReference type="HAMAP-Rule" id="MF_00565"/>
    </source>
</evidence>
<reference key="1">
    <citation type="journal article" date="2008" name="J. Bacteriol.">
        <title>Complete genome sequence of Leuconostoc citreum KM20.</title>
        <authorList>
            <person name="Kim J.F."/>
            <person name="Jeong H."/>
            <person name="Lee J.-S."/>
            <person name="Choi S.-H."/>
            <person name="Ha M."/>
            <person name="Hur C.-G."/>
            <person name="Kim J.-S."/>
            <person name="Lee S."/>
            <person name="Park H.-S."/>
            <person name="Park Y.-H."/>
            <person name="Oh T.K."/>
        </authorList>
    </citation>
    <scope>NUCLEOTIDE SEQUENCE [LARGE SCALE GENOMIC DNA]</scope>
    <source>
        <strain>KM20</strain>
    </source>
</reference>
<keyword id="KW-0961">Cell wall biogenesis/degradation</keyword>
<keyword id="KW-0963">Cytoplasm</keyword>
<keyword id="KW-0596">Phosphopantetheine</keyword>
<keyword id="KW-0597">Phosphoprotein</keyword>
<keyword id="KW-1185">Reference proteome</keyword>
<sequence>MAVKEEVVEILNTIIGEDISDQMDDDFFESGLLDSMSTVELLLDLESKFNIQAPVSEFNRDEWNTPNKVIAKVESLIG</sequence>
<comment type="function">
    <text evidence="1">Carrier protein involved in the D-alanylation of lipoteichoic acid (LTA). The loading of thioester-linked D-alanine onto DltC is catalyzed by D-alanine--D-alanyl carrier protein ligase DltA. The DltC-carried D-alanyl group is further transferred to cell membrane phosphatidylglycerol (PG) by forming an ester bond, probably catalyzed by DltD. D-alanylation of LTA plays an important role in modulating the properties of the cell wall in Gram-positive bacteria, influencing the net charge of the cell wall.</text>
</comment>
<comment type="pathway">
    <text evidence="1">Cell wall biogenesis; lipoteichoic acid biosynthesis.</text>
</comment>
<comment type="subcellular location">
    <subcellularLocation>
        <location evidence="1">Cytoplasm</location>
    </subcellularLocation>
</comment>
<comment type="PTM">
    <text evidence="1">4'-phosphopantetheine is transferred from CoA to a specific serine of apo-DCP.</text>
</comment>
<comment type="similarity">
    <text evidence="1">Belongs to the DltC family.</text>
</comment>
<gene>
    <name evidence="1" type="primary">dltC</name>
    <name type="ordered locus">LCK_01237</name>
</gene>
<organism>
    <name type="scientific">Leuconostoc citreum (strain KM20)</name>
    <dbReference type="NCBI Taxonomy" id="349519"/>
    <lineage>
        <taxon>Bacteria</taxon>
        <taxon>Bacillati</taxon>
        <taxon>Bacillota</taxon>
        <taxon>Bacilli</taxon>
        <taxon>Lactobacillales</taxon>
        <taxon>Lactobacillaceae</taxon>
        <taxon>Leuconostoc</taxon>
    </lineage>
</organism>
<name>DLTC_LEUCK</name>